<dbReference type="EMBL" id="CR848839">
    <property type="protein sequence ID" value="CAK11210.1"/>
    <property type="molecule type" value="Genomic_DNA"/>
</dbReference>
<dbReference type="EMBL" id="BC066443">
    <property type="protein sequence ID" value="AAH66443.1"/>
    <property type="molecule type" value="mRNA"/>
</dbReference>
<dbReference type="RefSeq" id="NP_996950.1">
    <property type="nucleotide sequence ID" value="NM_207067.1"/>
</dbReference>
<dbReference type="SMR" id="Q6NYV9"/>
<dbReference type="FunCoup" id="Q6NYV9">
    <property type="interactions" value="322"/>
</dbReference>
<dbReference type="IntAct" id="Q6NYV9">
    <property type="interactions" value="1"/>
</dbReference>
<dbReference type="STRING" id="7955.ENSDARP00000072160"/>
<dbReference type="PaxDb" id="7955-ENSDARP00000072160"/>
<dbReference type="Ensembl" id="ENSDART00000077694">
    <property type="protein sequence ID" value="ENSDARP00000072160"/>
    <property type="gene ID" value="ENSDARG00000055357"/>
</dbReference>
<dbReference type="GeneID" id="404599"/>
<dbReference type="KEGG" id="dre:404599"/>
<dbReference type="AGR" id="ZFIN:ZDB-GENE-040426-2435"/>
<dbReference type="CTD" id="123169"/>
<dbReference type="ZFIN" id="ZDB-GENE-040426-2435">
    <property type="gene designation" value="leo1"/>
</dbReference>
<dbReference type="eggNOG" id="KOG1181">
    <property type="taxonomic scope" value="Eukaryota"/>
</dbReference>
<dbReference type="eggNOG" id="KOG2428">
    <property type="taxonomic scope" value="Eukaryota"/>
</dbReference>
<dbReference type="HOGENOM" id="CLU_021818_1_0_1"/>
<dbReference type="InParanoid" id="Q6NYV9"/>
<dbReference type="OMA" id="TIRWREY"/>
<dbReference type="OrthoDB" id="20844at2759"/>
<dbReference type="PhylomeDB" id="Q6NYV9"/>
<dbReference type="TreeFam" id="TF321961"/>
<dbReference type="PRO" id="PR:Q6NYV9"/>
<dbReference type="Proteomes" id="UP000000437">
    <property type="component" value="Chromosome 18"/>
</dbReference>
<dbReference type="Bgee" id="ENSDARG00000055357">
    <property type="expression patterns" value="Expressed in tail bud paraxial mesoderm and 31 other cell types or tissues"/>
</dbReference>
<dbReference type="GO" id="GO:0016593">
    <property type="term" value="C:Cdc73/Paf1 complex"/>
    <property type="evidence" value="ECO:0000314"/>
    <property type="project" value="ZFIN"/>
</dbReference>
<dbReference type="GO" id="GO:0005634">
    <property type="term" value="C:nucleus"/>
    <property type="evidence" value="ECO:0000314"/>
    <property type="project" value="ZFIN"/>
</dbReference>
<dbReference type="GO" id="GO:1990269">
    <property type="term" value="F:RNA polymerase II C-terminal domain phosphoserine binding"/>
    <property type="evidence" value="ECO:0000318"/>
    <property type="project" value="GO_Central"/>
</dbReference>
<dbReference type="GO" id="GO:0048701">
    <property type="term" value="P:embryonic cranial skeleton morphogenesis"/>
    <property type="evidence" value="ECO:0000315"/>
    <property type="project" value="ZFIN"/>
</dbReference>
<dbReference type="GO" id="GO:0021782">
    <property type="term" value="P:glial cell development"/>
    <property type="evidence" value="ECO:0000315"/>
    <property type="project" value="ZFIN"/>
</dbReference>
<dbReference type="GO" id="GO:0007507">
    <property type="term" value="P:heart development"/>
    <property type="evidence" value="ECO:0000315"/>
    <property type="project" value="ZFIN"/>
</dbReference>
<dbReference type="GO" id="GO:0030318">
    <property type="term" value="P:melanocyte differentiation"/>
    <property type="evidence" value="ECO:0000315"/>
    <property type="project" value="ZFIN"/>
</dbReference>
<dbReference type="GO" id="GO:0014032">
    <property type="term" value="P:neural crest cell development"/>
    <property type="evidence" value="ECO:0000315"/>
    <property type="project" value="ZFIN"/>
</dbReference>
<dbReference type="GO" id="GO:0032968">
    <property type="term" value="P:positive regulation of transcription elongation by RNA polymerase II"/>
    <property type="evidence" value="ECO:0000318"/>
    <property type="project" value="GO_Central"/>
</dbReference>
<dbReference type="GO" id="GO:0021529">
    <property type="term" value="P:spinal cord oligodendrocyte cell differentiation"/>
    <property type="evidence" value="ECO:0000315"/>
    <property type="project" value="ZFIN"/>
</dbReference>
<dbReference type="GO" id="GO:0006368">
    <property type="term" value="P:transcription elongation by RNA polymerase II"/>
    <property type="evidence" value="ECO:0000250"/>
    <property type="project" value="UniProtKB"/>
</dbReference>
<dbReference type="GO" id="GO:0050936">
    <property type="term" value="P:xanthophore differentiation"/>
    <property type="evidence" value="ECO:0000315"/>
    <property type="project" value="ZFIN"/>
</dbReference>
<dbReference type="InterPro" id="IPR007149">
    <property type="entry name" value="Leo1"/>
</dbReference>
<dbReference type="PANTHER" id="PTHR23146">
    <property type="entry name" value="LEO1 PROTEIN"/>
    <property type="match status" value="1"/>
</dbReference>
<dbReference type="PANTHER" id="PTHR23146:SF0">
    <property type="entry name" value="RNA POLYMERASE-ASSOCIATED PROTEIN LEO1"/>
    <property type="match status" value="1"/>
</dbReference>
<dbReference type="Pfam" id="PF04004">
    <property type="entry name" value="Leo1"/>
    <property type="match status" value="1"/>
</dbReference>
<gene>
    <name type="primary">leo1</name>
    <name type="ORF">zgc:77374</name>
</gene>
<name>LEO1_DANRE</name>
<sequence>MADMDELFGSDGDSDNEQRDSGSGSGSDSDHERPRSASNASGSESAQSDRDHDDDEDEDGGKPSNKELFGDDSEDEHGSQHSGSQHSGSRHSGSRHSGSRHSGSRHSGSQHSGSQSERSGNQSDATMHSDNEHSMSEAHRGEQDDEDDDDRGHRSDVGSPASGAGSRRSDRGSGSPGSEAGSPRSEAGSGHSDPGTPHTDGEGSGKDAHSGDEKWGGDGKSDQSEDEDKQQNSDDERERSDEEGERQKSESIKGSDSEDDFTRKKKKKIASDSDSDSDAETQGGKKPAANDLFGEADDISSDSDAEKPLTPGQPLDADDGMEGDQPEEEPAPETRIEVEIPKVSTDLGSDLYFVKLPNFLSVEPRPFDPQYYEDEFEDEEMLDEEGRTRLKLKVENTIRWRSRRDEEGNEVKESNARIVKWSDGSMSLHLGNEVFDVYKAPLQGDHNHLFIRQGTGLQGQAVFKTKLTFRPHSTDSATHRKMTLSLADRCSKTQKIRILPMAGRDPESQRNEMIKKEEERLRASIRRESQQRRMREKQHQRGLNAGYLEPDRYDEDEEGEESISLAAIKSKYKGGGGLREERARIYSSDSDEGSDEDKAQRLMKAKRLDSDEEGENSGKRKAEEDEESASKKPKKYVISDEEDEDGDGERDGDRERGGDMDGDGDGDMEGDGDVDRDGDMDGDGEGDGEGDGEEDE</sequence>
<proteinExistence type="evidence at protein level"/>
<organism>
    <name type="scientific">Danio rerio</name>
    <name type="common">Zebrafish</name>
    <name type="synonym">Brachydanio rerio</name>
    <dbReference type="NCBI Taxonomy" id="7955"/>
    <lineage>
        <taxon>Eukaryota</taxon>
        <taxon>Metazoa</taxon>
        <taxon>Chordata</taxon>
        <taxon>Craniata</taxon>
        <taxon>Vertebrata</taxon>
        <taxon>Euteleostomi</taxon>
        <taxon>Actinopterygii</taxon>
        <taxon>Neopterygii</taxon>
        <taxon>Teleostei</taxon>
        <taxon>Ostariophysi</taxon>
        <taxon>Cypriniformes</taxon>
        <taxon>Danionidae</taxon>
        <taxon>Danioninae</taxon>
        <taxon>Danio</taxon>
    </lineage>
</organism>
<keyword id="KW-0010">Activator</keyword>
<keyword id="KW-0175">Coiled coil</keyword>
<keyword id="KW-0539">Nucleus</keyword>
<keyword id="KW-1185">Reference proteome</keyword>
<keyword id="KW-0804">Transcription</keyword>
<keyword id="KW-0805">Transcription regulation</keyword>
<comment type="function">
    <text evidence="1 6">Component of the PAF1 complex (PAF1C) which has multiple functions during transcription by RNA polymerase II. PAF1C associates with RNA polymerase II, is involved in transcriptional elongation and in histone modifications including methylation on histone H3 'Lys-4' (H3K4me3) (By similarity). PAF1C seems to be required for multiple steps in cardiac formation. Involved in heart development and required for differentiation of the atrioventricular boundary. Required for neural crest cell development.</text>
</comment>
<comment type="subunit">
    <text evidence="2 3 7">Component of the PAF1 complex, which at least consists of cdc73, paf1, leo1, ctr9 and rtf1 (By similarity). The PAF1 complex interacts with PHF5A (By similarity). Interacts with ctr9 (PubMed:21338598).</text>
</comment>
<comment type="subcellular location">
    <subcellularLocation>
        <location evidence="6">Nucleus</location>
    </subcellularLocation>
</comment>
<comment type="similarity">
    <text evidence="8">Belongs to the LEO1 family.</text>
</comment>
<accession>Q6NYV9</accession>
<evidence type="ECO:0000250" key="1"/>
<evidence type="ECO:0000250" key="2">
    <source>
        <dbReference type="UniProtKB" id="Q5XJE5"/>
    </source>
</evidence>
<evidence type="ECO:0000250" key="3">
    <source>
        <dbReference type="UniProtKB" id="Q8WVC0"/>
    </source>
</evidence>
<evidence type="ECO:0000255" key="4"/>
<evidence type="ECO:0000256" key="5">
    <source>
        <dbReference type="SAM" id="MobiDB-lite"/>
    </source>
</evidence>
<evidence type="ECO:0000269" key="6">
    <source>
    </source>
</evidence>
<evidence type="ECO:0000269" key="7">
    <source>
    </source>
</evidence>
<evidence type="ECO:0000305" key="8"/>
<feature type="chain" id="PRO_0000247823" description="RNA polymerase-associated protein LEO1">
    <location>
        <begin position="1"/>
        <end position="696"/>
    </location>
</feature>
<feature type="region of interest" description="Disordered" evidence="5">
    <location>
        <begin position="1"/>
        <end position="336"/>
    </location>
</feature>
<feature type="region of interest" description="Disordered" evidence="5">
    <location>
        <begin position="526"/>
        <end position="560"/>
    </location>
</feature>
<feature type="region of interest" description="Disordered" evidence="5">
    <location>
        <begin position="584"/>
        <end position="696"/>
    </location>
</feature>
<feature type="coiled-coil region" evidence="4">
    <location>
        <begin position="511"/>
        <end position="537"/>
    </location>
</feature>
<feature type="compositionally biased region" description="Acidic residues" evidence="5">
    <location>
        <begin position="1"/>
        <end position="15"/>
    </location>
</feature>
<feature type="compositionally biased region" description="Polar residues" evidence="5">
    <location>
        <begin position="36"/>
        <end position="46"/>
    </location>
</feature>
<feature type="compositionally biased region" description="Basic and acidic residues" evidence="5">
    <location>
        <begin position="60"/>
        <end position="69"/>
    </location>
</feature>
<feature type="compositionally biased region" description="Basic residues" evidence="5">
    <location>
        <begin position="88"/>
        <end position="104"/>
    </location>
</feature>
<feature type="compositionally biased region" description="Low complexity" evidence="5">
    <location>
        <begin position="105"/>
        <end position="116"/>
    </location>
</feature>
<feature type="compositionally biased region" description="Polar residues" evidence="5">
    <location>
        <begin position="117"/>
        <end position="126"/>
    </location>
</feature>
<feature type="compositionally biased region" description="Basic and acidic residues" evidence="5">
    <location>
        <begin position="127"/>
        <end position="142"/>
    </location>
</feature>
<feature type="compositionally biased region" description="Low complexity" evidence="5">
    <location>
        <begin position="158"/>
        <end position="186"/>
    </location>
</feature>
<feature type="compositionally biased region" description="Basic and acidic residues" evidence="5">
    <location>
        <begin position="199"/>
        <end position="262"/>
    </location>
</feature>
<feature type="compositionally biased region" description="Acidic residues" evidence="5">
    <location>
        <begin position="294"/>
        <end position="303"/>
    </location>
</feature>
<feature type="compositionally biased region" description="Acidic residues" evidence="5">
    <location>
        <begin position="316"/>
        <end position="331"/>
    </location>
</feature>
<feature type="compositionally biased region" description="Basic and acidic residues" evidence="5">
    <location>
        <begin position="526"/>
        <end position="539"/>
    </location>
</feature>
<feature type="compositionally biased region" description="Acidic residues" evidence="5">
    <location>
        <begin position="639"/>
        <end position="648"/>
    </location>
</feature>
<feature type="compositionally biased region" description="Basic and acidic residues" evidence="5">
    <location>
        <begin position="649"/>
        <end position="659"/>
    </location>
</feature>
<feature type="compositionally biased region" description="Acidic residues" evidence="5">
    <location>
        <begin position="660"/>
        <end position="672"/>
    </location>
</feature>
<feature type="compositionally biased region" description="Acidic residues" evidence="5">
    <location>
        <begin position="680"/>
        <end position="696"/>
    </location>
</feature>
<reference key="1">
    <citation type="journal article" date="2013" name="Nature">
        <title>The zebrafish reference genome sequence and its relationship to the human genome.</title>
        <authorList>
            <person name="Howe K."/>
            <person name="Clark M.D."/>
            <person name="Torroja C.F."/>
            <person name="Torrance J."/>
            <person name="Berthelot C."/>
            <person name="Muffato M."/>
            <person name="Collins J.E."/>
            <person name="Humphray S."/>
            <person name="McLaren K."/>
            <person name="Matthews L."/>
            <person name="McLaren S."/>
            <person name="Sealy I."/>
            <person name="Caccamo M."/>
            <person name="Churcher C."/>
            <person name="Scott C."/>
            <person name="Barrett J.C."/>
            <person name="Koch R."/>
            <person name="Rauch G.J."/>
            <person name="White S."/>
            <person name="Chow W."/>
            <person name="Kilian B."/>
            <person name="Quintais L.T."/>
            <person name="Guerra-Assuncao J.A."/>
            <person name="Zhou Y."/>
            <person name="Gu Y."/>
            <person name="Yen J."/>
            <person name="Vogel J.H."/>
            <person name="Eyre T."/>
            <person name="Redmond S."/>
            <person name="Banerjee R."/>
            <person name="Chi J."/>
            <person name="Fu B."/>
            <person name="Langley E."/>
            <person name="Maguire S.F."/>
            <person name="Laird G.K."/>
            <person name="Lloyd D."/>
            <person name="Kenyon E."/>
            <person name="Donaldson S."/>
            <person name="Sehra H."/>
            <person name="Almeida-King J."/>
            <person name="Loveland J."/>
            <person name="Trevanion S."/>
            <person name="Jones M."/>
            <person name="Quail M."/>
            <person name="Willey D."/>
            <person name="Hunt A."/>
            <person name="Burton J."/>
            <person name="Sims S."/>
            <person name="McLay K."/>
            <person name="Plumb B."/>
            <person name="Davis J."/>
            <person name="Clee C."/>
            <person name="Oliver K."/>
            <person name="Clark R."/>
            <person name="Riddle C."/>
            <person name="Elliot D."/>
            <person name="Threadgold G."/>
            <person name="Harden G."/>
            <person name="Ware D."/>
            <person name="Begum S."/>
            <person name="Mortimore B."/>
            <person name="Kerry G."/>
            <person name="Heath P."/>
            <person name="Phillimore B."/>
            <person name="Tracey A."/>
            <person name="Corby N."/>
            <person name="Dunn M."/>
            <person name="Johnson C."/>
            <person name="Wood J."/>
            <person name="Clark S."/>
            <person name="Pelan S."/>
            <person name="Griffiths G."/>
            <person name="Smith M."/>
            <person name="Glithero R."/>
            <person name="Howden P."/>
            <person name="Barker N."/>
            <person name="Lloyd C."/>
            <person name="Stevens C."/>
            <person name="Harley J."/>
            <person name="Holt K."/>
            <person name="Panagiotidis G."/>
            <person name="Lovell J."/>
            <person name="Beasley H."/>
            <person name="Henderson C."/>
            <person name="Gordon D."/>
            <person name="Auger K."/>
            <person name="Wright D."/>
            <person name="Collins J."/>
            <person name="Raisen C."/>
            <person name="Dyer L."/>
            <person name="Leung K."/>
            <person name="Robertson L."/>
            <person name="Ambridge K."/>
            <person name="Leongamornlert D."/>
            <person name="McGuire S."/>
            <person name="Gilderthorp R."/>
            <person name="Griffiths C."/>
            <person name="Manthravadi D."/>
            <person name="Nichol S."/>
            <person name="Barker G."/>
            <person name="Whitehead S."/>
            <person name="Kay M."/>
            <person name="Brown J."/>
            <person name="Murnane C."/>
            <person name="Gray E."/>
            <person name="Humphries M."/>
            <person name="Sycamore N."/>
            <person name="Barker D."/>
            <person name="Saunders D."/>
            <person name="Wallis J."/>
            <person name="Babbage A."/>
            <person name="Hammond S."/>
            <person name="Mashreghi-Mohammadi M."/>
            <person name="Barr L."/>
            <person name="Martin S."/>
            <person name="Wray P."/>
            <person name="Ellington A."/>
            <person name="Matthews N."/>
            <person name="Ellwood M."/>
            <person name="Woodmansey R."/>
            <person name="Clark G."/>
            <person name="Cooper J."/>
            <person name="Tromans A."/>
            <person name="Grafham D."/>
            <person name="Skuce C."/>
            <person name="Pandian R."/>
            <person name="Andrews R."/>
            <person name="Harrison E."/>
            <person name="Kimberley A."/>
            <person name="Garnett J."/>
            <person name="Fosker N."/>
            <person name="Hall R."/>
            <person name="Garner P."/>
            <person name="Kelly D."/>
            <person name="Bird C."/>
            <person name="Palmer S."/>
            <person name="Gehring I."/>
            <person name="Berger A."/>
            <person name="Dooley C.M."/>
            <person name="Ersan-Urun Z."/>
            <person name="Eser C."/>
            <person name="Geiger H."/>
            <person name="Geisler M."/>
            <person name="Karotki L."/>
            <person name="Kirn A."/>
            <person name="Konantz J."/>
            <person name="Konantz M."/>
            <person name="Oberlander M."/>
            <person name="Rudolph-Geiger S."/>
            <person name="Teucke M."/>
            <person name="Lanz C."/>
            <person name="Raddatz G."/>
            <person name="Osoegawa K."/>
            <person name="Zhu B."/>
            <person name="Rapp A."/>
            <person name="Widaa S."/>
            <person name="Langford C."/>
            <person name="Yang F."/>
            <person name="Schuster S.C."/>
            <person name="Carter N.P."/>
            <person name="Harrow J."/>
            <person name="Ning Z."/>
            <person name="Herrero J."/>
            <person name="Searle S.M."/>
            <person name="Enright A."/>
            <person name="Geisler R."/>
            <person name="Plasterk R.H."/>
            <person name="Lee C."/>
            <person name="Westerfield M."/>
            <person name="de Jong P.J."/>
            <person name="Zon L.I."/>
            <person name="Postlethwait J.H."/>
            <person name="Nusslein-Volhard C."/>
            <person name="Hubbard T.J."/>
            <person name="Roest Crollius H."/>
            <person name="Rogers J."/>
            <person name="Stemple D.L."/>
        </authorList>
    </citation>
    <scope>NUCLEOTIDE SEQUENCE [LARGE SCALE GENOMIC DNA]</scope>
    <source>
        <strain>Tuebingen</strain>
    </source>
</reference>
<reference key="2">
    <citation type="submission" date="2004-02" db="EMBL/GenBank/DDBJ databases">
        <authorList>
            <consortium name="NIH - Zebrafish Gene Collection (ZGC) project"/>
        </authorList>
    </citation>
    <scope>NUCLEOTIDE SEQUENCE [LARGE SCALE MRNA]</scope>
    <source>
        <tissue>Embryo</tissue>
    </source>
</reference>
<reference key="3">
    <citation type="journal article" date="2010" name="Dev. Biol.">
        <title>The PAF1 complex component Leo1 is essential for cardiac and neural crest development in zebrafish.</title>
        <authorList>
            <person name="Nguyen C.T."/>
            <person name="Langenbacher A."/>
            <person name="Hsieh M."/>
            <person name="Chen J.N."/>
        </authorList>
    </citation>
    <scope>FUNCTION</scope>
    <scope>SUBCELLULAR LOCATION</scope>
</reference>
<reference key="4">
    <citation type="journal article" date="2011" name="Dev. Biol.">
        <title>The PAF1 complex differentially regulates cardiomyocyte specification.</title>
        <authorList>
            <person name="Langenbacher A.D."/>
            <person name="Nguyen C.T."/>
            <person name="Cavanaugh A.M."/>
            <person name="Huang J."/>
            <person name="Lu F."/>
            <person name="Chen J.N."/>
        </authorList>
    </citation>
    <scope>INTERACTION WITH CTR9</scope>
</reference>
<protein>
    <recommendedName>
        <fullName>RNA polymerase-associated protein LEO1</fullName>
    </recommendedName>
</protein>